<protein>
    <recommendedName>
        <fullName>Vacuolar-sorting protein SNF8</fullName>
    </recommendedName>
    <alternativeName>
        <fullName>ESCRT-II complex subunit VPS22</fullName>
    </alternativeName>
    <alternativeName>
        <fullName>Vacuolar protein-sorting-associated protein 22</fullName>
    </alternativeName>
</protein>
<proteinExistence type="evidence at protein level"/>
<reference key="1">
    <citation type="journal article" date="1995" name="Yeast">
        <title>Molecular analysis of the SNF8 gene of Saccharomyces cerevisiae.</title>
        <authorList>
            <person name="Yeghiayan P."/>
            <person name="Tu J."/>
            <person name="Vallier L.G."/>
            <person name="Carlson M."/>
        </authorList>
    </citation>
    <scope>NUCLEOTIDE SEQUENCE [GENOMIC DNA]</scope>
    <source>
        <strain>ATCC 204508 / S288c</strain>
    </source>
</reference>
<reference key="2">
    <citation type="journal article" date="1997" name="Nature">
        <title>The nucleotide sequence of Saccharomyces cerevisiae chromosome XVI.</title>
        <authorList>
            <person name="Bussey H."/>
            <person name="Storms R.K."/>
            <person name="Ahmed A."/>
            <person name="Albermann K."/>
            <person name="Allen E."/>
            <person name="Ansorge W."/>
            <person name="Araujo R."/>
            <person name="Aparicio A."/>
            <person name="Barrell B.G."/>
            <person name="Badcock K."/>
            <person name="Benes V."/>
            <person name="Botstein D."/>
            <person name="Bowman S."/>
            <person name="Brueckner M."/>
            <person name="Carpenter J."/>
            <person name="Cherry J.M."/>
            <person name="Chung E."/>
            <person name="Churcher C.M."/>
            <person name="Coster F."/>
            <person name="Davis K."/>
            <person name="Davis R.W."/>
            <person name="Dietrich F.S."/>
            <person name="Delius H."/>
            <person name="DiPaolo T."/>
            <person name="Dubois E."/>
            <person name="Duesterhoeft A."/>
            <person name="Duncan M."/>
            <person name="Floeth M."/>
            <person name="Fortin N."/>
            <person name="Friesen J.D."/>
            <person name="Fritz C."/>
            <person name="Goffeau A."/>
            <person name="Hall J."/>
            <person name="Hebling U."/>
            <person name="Heumann K."/>
            <person name="Hilbert H."/>
            <person name="Hillier L.W."/>
            <person name="Hunicke-Smith S."/>
            <person name="Hyman R.W."/>
            <person name="Johnston M."/>
            <person name="Kalman S."/>
            <person name="Kleine K."/>
            <person name="Komp C."/>
            <person name="Kurdi O."/>
            <person name="Lashkari D."/>
            <person name="Lew H."/>
            <person name="Lin A."/>
            <person name="Lin D."/>
            <person name="Louis E.J."/>
            <person name="Marathe R."/>
            <person name="Messenguy F."/>
            <person name="Mewes H.-W."/>
            <person name="Mirtipati S."/>
            <person name="Moestl D."/>
            <person name="Mueller-Auer S."/>
            <person name="Namath A."/>
            <person name="Nentwich U."/>
            <person name="Oefner P."/>
            <person name="Pearson D."/>
            <person name="Petel F.X."/>
            <person name="Pohl T.M."/>
            <person name="Purnelle B."/>
            <person name="Rajandream M.A."/>
            <person name="Rechmann S."/>
            <person name="Rieger M."/>
            <person name="Riles L."/>
            <person name="Roberts D."/>
            <person name="Schaefer M."/>
            <person name="Scharfe M."/>
            <person name="Scherens B."/>
            <person name="Schramm S."/>
            <person name="Schroeder M."/>
            <person name="Sdicu A.-M."/>
            <person name="Tettelin H."/>
            <person name="Urrestarazu L.A."/>
            <person name="Ushinsky S."/>
            <person name="Vierendeels F."/>
            <person name="Vissers S."/>
            <person name="Voss H."/>
            <person name="Walsh S.V."/>
            <person name="Wambutt R."/>
            <person name="Wang Y."/>
            <person name="Wedler E."/>
            <person name="Wedler H."/>
            <person name="Winnett E."/>
            <person name="Zhong W.-W."/>
            <person name="Zollner A."/>
            <person name="Vo D.H."/>
            <person name="Hani J."/>
        </authorList>
    </citation>
    <scope>NUCLEOTIDE SEQUENCE [LARGE SCALE GENOMIC DNA]</scope>
    <source>
        <strain>ATCC 204508 / S288c</strain>
    </source>
</reference>
<reference key="3">
    <citation type="journal article" date="2014" name="G3 (Bethesda)">
        <title>The reference genome sequence of Saccharomyces cerevisiae: Then and now.</title>
        <authorList>
            <person name="Engel S.R."/>
            <person name="Dietrich F.S."/>
            <person name="Fisk D.G."/>
            <person name="Binkley G."/>
            <person name="Balakrishnan R."/>
            <person name="Costanzo M.C."/>
            <person name="Dwight S.S."/>
            <person name="Hitz B.C."/>
            <person name="Karra K."/>
            <person name="Nash R.S."/>
            <person name="Weng S."/>
            <person name="Wong E.D."/>
            <person name="Lloyd P."/>
            <person name="Skrzypek M.S."/>
            <person name="Miyasato S.R."/>
            <person name="Simison M."/>
            <person name="Cherry J.M."/>
        </authorList>
    </citation>
    <scope>GENOME REANNOTATION</scope>
    <source>
        <strain>ATCC 204508 / S288c</strain>
    </source>
</reference>
<reference key="4">
    <citation type="journal article" date="2007" name="Genome Res.">
        <title>Approaching a complete repository of sequence-verified protein-encoding clones for Saccharomyces cerevisiae.</title>
        <authorList>
            <person name="Hu Y."/>
            <person name="Rolfs A."/>
            <person name="Bhullar B."/>
            <person name="Murthy T.V.S."/>
            <person name="Zhu C."/>
            <person name="Berger M.F."/>
            <person name="Camargo A.A."/>
            <person name="Kelley F."/>
            <person name="McCarron S."/>
            <person name="Jepson D."/>
            <person name="Richardson A."/>
            <person name="Raphael J."/>
            <person name="Moreira D."/>
            <person name="Taycher E."/>
            <person name="Zuo D."/>
            <person name="Mohr S."/>
            <person name="Kane M.F."/>
            <person name="Williamson J."/>
            <person name="Simpson A.J.G."/>
            <person name="Bulyk M.L."/>
            <person name="Harlow E."/>
            <person name="Marsischky G."/>
            <person name="Kolodner R.D."/>
            <person name="LaBaer J."/>
        </authorList>
    </citation>
    <scope>NUCLEOTIDE SEQUENCE [GENOMIC DNA]</scope>
    <source>
        <strain>ATCC 204508 / S288c</strain>
    </source>
</reference>
<reference key="5">
    <citation type="journal article" date="2002" name="Dev. Cell">
        <title>Endosome-associated complex, ESCRT-II, recruits transport machinery for protein sorting at the multivesicular body.</title>
        <authorList>
            <person name="Babst M."/>
            <person name="Katzmann D.J."/>
            <person name="Snyder W.B."/>
            <person name="Wendland B."/>
            <person name="Emr S.D."/>
        </authorList>
    </citation>
    <scope>FUNCTION</scope>
    <scope>SUBUNIT</scope>
    <scope>SUBCELLULAR LOCATION</scope>
</reference>
<reference key="6">
    <citation type="journal article" date="2003" name="Nature">
        <title>Global analysis of protein expression in yeast.</title>
        <authorList>
            <person name="Ghaemmaghami S."/>
            <person name="Huh W.-K."/>
            <person name="Bower K."/>
            <person name="Howson R.W."/>
            <person name="Belle A."/>
            <person name="Dephoure N."/>
            <person name="O'Shea E.K."/>
            <person name="Weissman J.S."/>
        </authorList>
    </citation>
    <scope>LEVEL OF PROTEIN EXPRESSION [LARGE SCALE ANALYSIS]</scope>
</reference>
<reference key="7">
    <citation type="journal article" date="2004" name="Dev. Cell">
        <title>ESCRT-II, an endosome-associated complex required for protein sorting: crystal structure and interactions with ESCRT-III and membranes.</title>
        <authorList>
            <person name="Teo H."/>
            <person name="Perisic O."/>
            <person name="Gonzalez B."/>
            <person name="Williams R.L."/>
        </authorList>
    </citation>
    <scope>X-RAY CRYSTALLOGRAPHY (3.6 ANGSTROMS) IN COMPLEX WITH VPS25 AND VPS36</scope>
</reference>
<reference key="8">
    <citation type="journal article" date="2004" name="Nature">
        <title>Structure of the ESCRT-II endosomal trafficking complex.</title>
        <authorList>
            <person name="Hierro A."/>
            <person name="Sun J."/>
            <person name="Rusnak A.S."/>
            <person name="Kim J."/>
            <person name="Prag G."/>
            <person name="Emr S.D."/>
            <person name="Hurley J.H."/>
        </authorList>
    </citation>
    <scope>X-RAY CRYSTALLOGRAPHY (3.6 ANGSTROMS) IN COMPLEX WITH VPS25 AND VPS36</scope>
</reference>
<comment type="function">
    <text evidence="2">Component of the endosomal sorting complex required for transport II (ESCRT-II), which is required for multivesicular body (MVB) formation and sorting of endosomal cargo proteins into MVBs. The MVB pathway mediates delivery of transmembrane proteins into the lumen of the lysosome for degradation. The ESCRT-II complex is probably involved in the recruitment of the ESCRT-III complex.</text>
</comment>
<comment type="subunit">
    <text evidence="2 4 5">Component of the endosomal sorting complex required for transport II (ESCRT-II), which consists of 2 copies of VPS25, 1 copy of SNF8, and 1 copy of VPS36. The ESCRT-II complex interacts directly with the VPS20 subunit of the ESCRT-III complex.</text>
</comment>
<comment type="interaction">
    <interactant intactId="EBI-30277">
        <id>Q12483</id>
    </interactant>
    <interactant intactId="EBI-25595">
        <id>P47142</id>
        <label>VPS25</label>
    </interactant>
    <organismsDiffer>false</organismsDiffer>
    <experiments>7</experiments>
</comment>
<comment type="interaction">
    <interactant intactId="EBI-30277">
        <id>Q12483</id>
    </interactant>
    <interactant intactId="EBI-36540">
        <id>Q06696</id>
        <label>VPS36</label>
    </interactant>
    <organismsDiffer>false</organismsDiffer>
    <experiments>11</experiments>
</comment>
<comment type="subcellular location">
    <subcellularLocation>
        <location evidence="2">Cytoplasm</location>
    </subcellularLocation>
    <subcellularLocation>
        <location evidence="2">Endosome membrane</location>
        <topology evidence="2">Peripheral membrane protein</topology>
    </subcellularLocation>
</comment>
<comment type="miscellaneous">
    <text evidence="3">Present with 1040 molecules/cell in log phase SD medium.</text>
</comment>
<comment type="similarity">
    <text evidence="6">Belongs to the SNF8 family.</text>
</comment>
<keyword id="KW-0002">3D-structure</keyword>
<keyword id="KW-0175">Coiled coil</keyword>
<keyword id="KW-0963">Cytoplasm</keyword>
<keyword id="KW-0967">Endosome</keyword>
<keyword id="KW-0472">Membrane</keyword>
<keyword id="KW-0653">Protein transport</keyword>
<keyword id="KW-1185">Reference proteome</keyword>
<keyword id="KW-0813">Transport</keyword>
<gene>
    <name type="primary">SNF8</name>
    <name type="synonym">VPS22</name>
    <name type="ordered locus">YPL002C</name>
</gene>
<evidence type="ECO:0000255" key="1"/>
<evidence type="ECO:0000269" key="2">
    <source>
    </source>
</evidence>
<evidence type="ECO:0000269" key="3">
    <source>
    </source>
</evidence>
<evidence type="ECO:0000269" key="4">
    <source>
    </source>
</evidence>
<evidence type="ECO:0000269" key="5">
    <source>
    </source>
</evidence>
<evidence type="ECO:0000305" key="6"/>
<sequence>MKQFGLAAFDELKDGKYNDVNKTILEKQSVELRDQLMVFQERLVEFAKKHNSELQASPEFRSKFMHMCSSIGIDPLSLFDRDKHLFTVNDFYYEVCLKVIEICRQTKDMNGGVISFQELEKVHFRKLNVGLDDLEKSIDMLKSLECFEIFQIRGKKFLRSVPNELTSDQTKILEICSILGYSSISLLKANLGWEAVRSKSALDEMVANGLLWIDYQGGAEALYWDPSWITRQL</sequence>
<organism>
    <name type="scientific">Saccharomyces cerevisiae (strain ATCC 204508 / S288c)</name>
    <name type="common">Baker's yeast</name>
    <dbReference type="NCBI Taxonomy" id="559292"/>
    <lineage>
        <taxon>Eukaryota</taxon>
        <taxon>Fungi</taxon>
        <taxon>Dikarya</taxon>
        <taxon>Ascomycota</taxon>
        <taxon>Saccharomycotina</taxon>
        <taxon>Saccharomycetes</taxon>
        <taxon>Saccharomycetales</taxon>
        <taxon>Saccharomycetaceae</taxon>
        <taxon>Saccharomyces</taxon>
    </lineage>
</organism>
<name>SNF8_YEAST</name>
<feature type="chain" id="PRO_0000215214" description="Vacuolar-sorting protein SNF8">
    <location>
        <begin position="1"/>
        <end position="233"/>
    </location>
</feature>
<feature type="coiled-coil region" evidence="1">
    <location>
        <begin position="23"/>
        <end position="46"/>
    </location>
</feature>
<accession>Q12483</accession>
<accession>D6W410</accession>
<dbReference type="EMBL" id="U10361">
    <property type="protein sequence ID" value="AAA86824.1"/>
    <property type="molecule type" value="Genomic_DNA"/>
</dbReference>
<dbReference type="EMBL" id="U33335">
    <property type="protein sequence ID" value="AAB68103.1"/>
    <property type="molecule type" value="Genomic_DNA"/>
</dbReference>
<dbReference type="EMBL" id="Z71255">
    <property type="protein sequence ID" value="CAA95039.1"/>
    <property type="molecule type" value="Genomic_DNA"/>
</dbReference>
<dbReference type="EMBL" id="Z48483">
    <property type="protein sequence ID" value="CAA88384.1"/>
    <property type="molecule type" value="Genomic_DNA"/>
</dbReference>
<dbReference type="EMBL" id="AY692759">
    <property type="protein sequence ID" value="AAT92778.1"/>
    <property type="molecule type" value="Genomic_DNA"/>
</dbReference>
<dbReference type="EMBL" id="BK006949">
    <property type="protein sequence ID" value="DAA11426.1"/>
    <property type="molecule type" value="Genomic_DNA"/>
</dbReference>
<dbReference type="PIR" id="S52529">
    <property type="entry name" value="S52529"/>
</dbReference>
<dbReference type="RefSeq" id="NP_015323.1">
    <property type="nucleotide sequence ID" value="NM_001183816.1"/>
</dbReference>
<dbReference type="PDB" id="1U5T">
    <property type="method" value="X-ray"/>
    <property type="resolution" value="3.60 A"/>
    <property type="chains" value="A=1-233"/>
</dbReference>
<dbReference type="PDB" id="1W7P">
    <property type="method" value="X-ray"/>
    <property type="resolution" value="3.60 A"/>
    <property type="chains" value="A=1-233"/>
</dbReference>
<dbReference type="PDBsum" id="1U5T"/>
<dbReference type="PDBsum" id="1W7P"/>
<dbReference type="SMR" id="Q12483"/>
<dbReference type="BioGRID" id="36175">
    <property type="interactions" value="131"/>
</dbReference>
<dbReference type="ComplexPortal" id="CPX-1623">
    <property type="entry name" value="ESCRT-II complex"/>
</dbReference>
<dbReference type="DIP" id="DIP-1745N"/>
<dbReference type="FunCoup" id="Q12483">
    <property type="interactions" value="760"/>
</dbReference>
<dbReference type="IntAct" id="Q12483">
    <property type="interactions" value="6"/>
</dbReference>
<dbReference type="MINT" id="Q12483"/>
<dbReference type="STRING" id="4932.YPL002C"/>
<dbReference type="TCDB" id="3.A.31.1.1">
    <property type="family name" value="the endosomal sorting complexes required for transport iii (escrt-iii) family"/>
</dbReference>
<dbReference type="iPTMnet" id="Q12483"/>
<dbReference type="PaxDb" id="4932-YPL002C"/>
<dbReference type="PeptideAtlas" id="Q12483"/>
<dbReference type="EnsemblFungi" id="YPL002C_mRNA">
    <property type="protein sequence ID" value="YPL002C"/>
    <property type="gene ID" value="YPL002C"/>
</dbReference>
<dbReference type="GeneID" id="856105"/>
<dbReference type="KEGG" id="sce:YPL002C"/>
<dbReference type="AGR" id="SGD:S000005923"/>
<dbReference type="SGD" id="S000005923">
    <property type="gene designation" value="SNF8"/>
</dbReference>
<dbReference type="VEuPathDB" id="FungiDB:YPL002C"/>
<dbReference type="eggNOG" id="KOG3341">
    <property type="taxonomic scope" value="Eukaryota"/>
</dbReference>
<dbReference type="GeneTree" id="ENSGT00390000007843"/>
<dbReference type="HOGENOM" id="CLU_070147_0_1_1"/>
<dbReference type="InParanoid" id="Q12483"/>
<dbReference type="OMA" id="QIVEVCM"/>
<dbReference type="OrthoDB" id="283883at2759"/>
<dbReference type="BioCyc" id="YEAST:G3O-33921-MONOMER"/>
<dbReference type="Reactome" id="R-SCE-917729">
    <property type="pathway name" value="Endosomal Sorting Complex Required For Transport (ESCRT)"/>
</dbReference>
<dbReference type="BioGRID-ORCS" id="856105">
    <property type="hits" value="1 hit in 10 CRISPR screens"/>
</dbReference>
<dbReference type="EvolutionaryTrace" id="Q12483"/>
<dbReference type="PRO" id="PR:Q12483"/>
<dbReference type="Proteomes" id="UP000002311">
    <property type="component" value="Chromosome XVI"/>
</dbReference>
<dbReference type="RNAct" id="Q12483">
    <property type="molecule type" value="protein"/>
</dbReference>
<dbReference type="GO" id="GO:0000814">
    <property type="term" value="C:ESCRT II complex"/>
    <property type="evidence" value="ECO:0000314"/>
    <property type="project" value="SGD"/>
</dbReference>
<dbReference type="GO" id="GO:0008289">
    <property type="term" value="F:lipid binding"/>
    <property type="evidence" value="ECO:0000269"/>
    <property type="project" value="DisProt"/>
</dbReference>
<dbReference type="GO" id="GO:1904669">
    <property type="term" value="P:ATP export"/>
    <property type="evidence" value="ECO:0000315"/>
    <property type="project" value="SGD"/>
</dbReference>
<dbReference type="GO" id="GO:0000122">
    <property type="term" value="P:negative regulation of transcription by RNA polymerase II"/>
    <property type="evidence" value="ECO:0000315"/>
    <property type="project" value="SGD"/>
</dbReference>
<dbReference type="GO" id="GO:0006623">
    <property type="term" value="P:protein targeting to vacuole"/>
    <property type="evidence" value="ECO:0000315"/>
    <property type="project" value="SGD"/>
</dbReference>
<dbReference type="GO" id="GO:0043328">
    <property type="term" value="P:protein transport to vacuole involved in ubiquitin-dependent protein catabolic process via the multivesicular body sorting pathway"/>
    <property type="evidence" value="ECO:0000318"/>
    <property type="project" value="GO_Central"/>
</dbReference>
<dbReference type="GO" id="GO:0043162">
    <property type="term" value="P:ubiquitin-dependent protein catabolic process via the multivesicular body sorting pathway"/>
    <property type="evidence" value="ECO:0000314"/>
    <property type="project" value="ComplexPortal"/>
</dbReference>
<dbReference type="DisProt" id="DP01604"/>
<dbReference type="FunFam" id="1.10.10.10:FF:000397">
    <property type="entry name" value="Vacuolar-sorting protein SNF8"/>
    <property type="match status" value="1"/>
</dbReference>
<dbReference type="FunFam" id="1.10.10.10:FF:000692">
    <property type="entry name" value="Vacuolar-sorting protein SNF8"/>
    <property type="match status" value="1"/>
</dbReference>
<dbReference type="Gene3D" id="6.10.140.180">
    <property type="match status" value="1"/>
</dbReference>
<dbReference type="Gene3D" id="1.10.10.10">
    <property type="entry name" value="Winged helix-like DNA-binding domain superfamily/Winged helix DNA-binding domain"/>
    <property type="match status" value="2"/>
</dbReference>
<dbReference type="InterPro" id="IPR016689">
    <property type="entry name" value="ESCRT-2_cplx_Snf8"/>
</dbReference>
<dbReference type="InterPro" id="IPR040608">
    <property type="entry name" value="Snf8/Vps36"/>
</dbReference>
<dbReference type="InterPro" id="IPR036388">
    <property type="entry name" value="WH-like_DNA-bd_sf"/>
</dbReference>
<dbReference type="InterPro" id="IPR036390">
    <property type="entry name" value="WH_DNA-bd_sf"/>
</dbReference>
<dbReference type="PANTHER" id="PTHR12806">
    <property type="entry name" value="EAP30 SUBUNIT OF ELL COMPLEX"/>
    <property type="match status" value="1"/>
</dbReference>
<dbReference type="PANTHER" id="PTHR12806:SF0">
    <property type="entry name" value="VACUOLAR-SORTING PROTEIN SNF8"/>
    <property type="match status" value="1"/>
</dbReference>
<dbReference type="Pfam" id="PF04157">
    <property type="entry name" value="EAP30"/>
    <property type="match status" value="1"/>
</dbReference>
<dbReference type="PIRSF" id="PIRSF017215">
    <property type="entry name" value="ESCRT2_Vps22"/>
    <property type="match status" value="1"/>
</dbReference>
<dbReference type="SUPFAM" id="SSF46785">
    <property type="entry name" value="Winged helix' DNA-binding domain"/>
    <property type="match status" value="2"/>
</dbReference>